<organism evidence="3">
    <name type="scientific">Arabidopsis thaliana</name>
    <name type="common">Mouse-ear cress</name>
    <dbReference type="NCBI Taxonomy" id="3702"/>
    <lineage>
        <taxon>Eukaryota</taxon>
        <taxon>Viridiplantae</taxon>
        <taxon>Streptophyta</taxon>
        <taxon>Embryophyta</taxon>
        <taxon>Tracheophyta</taxon>
        <taxon>Spermatophyta</taxon>
        <taxon>Magnoliopsida</taxon>
        <taxon>eudicotyledons</taxon>
        <taxon>Gunneridae</taxon>
        <taxon>Pentapetalae</taxon>
        <taxon>rosids</taxon>
        <taxon>malvids</taxon>
        <taxon>Brassicales</taxon>
        <taxon>Brassicaceae</taxon>
        <taxon>Camelineae</taxon>
        <taxon>Arabidopsis</taxon>
    </lineage>
</organism>
<feature type="signal peptide" evidence="2">
    <location>
        <begin position="1"/>
        <end position="27"/>
    </location>
</feature>
<feature type="chain" id="PRO_0000017307" description="Putative defensin-like protein 70">
    <location>
        <begin position="28"/>
        <end position="82"/>
    </location>
</feature>
<feature type="disulfide bond" evidence="1">
    <location>
        <begin position="39"/>
        <end position="80"/>
    </location>
</feature>
<feature type="disulfide bond" evidence="1">
    <location>
        <begin position="43"/>
        <end position="66"/>
    </location>
</feature>
<feature type="disulfide bond" evidence="1">
    <location>
        <begin position="52"/>
        <end position="78"/>
    </location>
</feature>
<feature type="disulfide bond" evidence="1">
    <location>
        <begin position="56"/>
        <end position="79"/>
    </location>
</feature>
<accession>P82792</accession>
<reference evidence="3" key="1">
    <citation type="journal article" date="1998" name="DNA Res.">
        <title>Structural analysis of Arabidopsis thaliana chromosome 5. V. Sequence features of the regions of 1,381,565 bp covered by twenty one physically assigned P1 and TAC clones.</title>
        <authorList>
            <person name="Kaneko T."/>
            <person name="Kotani H."/>
            <person name="Nakamura Y."/>
            <person name="Sato S."/>
            <person name="Asamizu E."/>
            <person name="Miyajima N."/>
            <person name="Tabata S."/>
        </authorList>
    </citation>
    <scope>NUCLEOTIDE SEQUENCE [LARGE SCALE GENOMIC DNA]</scope>
    <source>
        <strain>cv. Columbia</strain>
    </source>
</reference>
<reference key="2">
    <citation type="journal article" date="2017" name="Plant J.">
        <title>Araport11: a complete reannotation of the Arabidopsis thaliana reference genome.</title>
        <authorList>
            <person name="Cheng C.Y."/>
            <person name="Krishnakumar V."/>
            <person name="Chan A.P."/>
            <person name="Thibaud-Nissen F."/>
            <person name="Schobel S."/>
            <person name="Town C.D."/>
        </authorList>
    </citation>
    <scope>GENOME REANNOTATION</scope>
    <source>
        <strain>cv. Columbia</strain>
    </source>
</reference>
<reference evidence="3" key="3">
    <citation type="journal article" date="2001" name="Plant Mol. Biol.">
        <title>Two large Arabidopsis thaliana gene families are homologous to the Brassica gene superfamily that encodes pollen coat proteins and the male component of the self-incompatibility response.</title>
        <authorList>
            <person name="Vanoosthuyse V."/>
            <person name="Miege C."/>
            <person name="Dumas C."/>
            <person name="Cock J.M."/>
        </authorList>
    </citation>
    <scope>IDENTIFICATION</scope>
</reference>
<reference key="4">
    <citation type="journal article" date="2005" name="Plant Physiol.">
        <title>Genome organization of more than 300 defensin-like genes in Arabidopsis.</title>
        <authorList>
            <person name="Silverstein K.A.T."/>
            <person name="Graham M.A."/>
            <person name="Paape T.D."/>
            <person name="VandenBosch K.A."/>
        </authorList>
    </citation>
    <scope>GENE FAMILY</scope>
</reference>
<evidence type="ECO:0000250" key="1"/>
<evidence type="ECO:0000255" key="2"/>
<evidence type="ECO:0000305" key="3"/>
<gene>
    <name type="primary">LCR83</name>
    <name type="ordered locus">At5g54225</name>
    <name type="ORF">MDK4</name>
</gene>
<protein>
    <recommendedName>
        <fullName>Putative defensin-like protein 70</fullName>
    </recommendedName>
    <alternativeName>
        <fullName>Putative low-molecular-weight cysteine-rich protein 83</fullName>
        <shortName>Protein LCR83</shortName>
    </alternativeName>
</protein>
<comment type="subcellular location">
    <subcellularLocation>
        <location evidence="1">Secreted</location>
    </subcellularLocation>
</comment>
<comment type="similarity">
    <text evidence="3">Belongs to the DEFL family.</text>
</comment>
<dbReference type="EMBL" id="AB010695">
    <property type="status" value="NOT_ANNOTATED_CDS"/>
    <property type="molecule type" value="Genomic_DNA"/>
</dbReference>
<dbReference type="EMBL" id="CP002688">
    <property type="protein sequence ID" value="AED96470.1"/>
    <property type="molecule type" value="Genomic_DNA"/>
</dbReference>
<dbReference type="RefSeq" id="NP_001032074.1">
    <property type="nucleotide sequence ID" value="NM_001036997.2"/>
</dbReference>
<dbReference type="SMR" id="P82792"/>
<dbReference type="PaxDb" id="3702-AT5G54225.1"/>
<dbReference type="EnsemblPlants" id="AT5G54225.1">
    <property type="protein sequence ID" value="AT5G54225.1"/>
    <property type="gene ID" value="AT5G54225"/>
</dbReference>
<dbReference type="GeneID" id="3771507"/>
<dbReference type="Gramene" id="AT5G54225.1">
    <property type="protein sequence ID" value="AT5G54225.1"/>
    <property type="gene ID" value="AT5G54225"/>
</dbReference>
<dbReference type="KEGG" id="ath:AT5G54225"/>
<dbReference type="Araport" id="AT5G54225"/>
<dbReference type="TAIR" id="AT5G54225">
    <property type="gene designation" value="LCR83"/>
</dbReference>
<dbReference type="HOGENOM" id="CLU_2561419_0_0_1"/>
<dbReference type="InParanoid" id="P82792"/>
<dbReference type="OMA" id="LCFNPCT"/>
<dbReference type="PhylomeDB" id="P82792"/>
<dbReference type="PRO" id="PR:P82792"/>
<dbReference type="Proteomes" id="UP000006548">
    <property type="component" value="Chromosome 5"/>
</dbReference>
<dbReference type="ExpressionAtlas" id="P82792">
    <property type="expression patterns" value="baseline and differential"/>
</dbReference>
<dbReference type="GO" id="GO:0005576">
    <property type="term" value="C:extracellular region"/>
    <property type="evidence" value="ECO:0007669"/>
    <property type="project" value="UniProtKB-SubCell"/>
</dbReference>
<dbReference type="GO" id="GO:0050832">
    <property type="term" value="P:defense response to fungus"/>
    <property type="evidence" value="ECO:0007669"/>
    <property type="project" value="UniProtKB-KW"/>
</dbReference>
<dbReference type="GO" id="GO:0031640">
    <property type="term" value="P:killing of cells of another organism"/>
    <property type="evidence" value="ECO:0007669"/>
    <property type="project" value="UniProtKB-KW"/>
</dbReference>
<dbReference type="InterPro" id="IPR056373">
    <property type="entry name" value="Defensin-like_dom"/>
</dbReference>
<dbReference type="Pfam" id="PF24552">
    <property type="entry name" value="Defensin"/>
    <property type="match status" value="1"/>
</dbReference>
<name>DEF70_ARATH</name>
<sequence>MKMESSKMLVVFTLMVLIAVSSDLVSGNFASGEASSQLCFNPCTPQLGNNECNTICMNKKYKEGSCVGFGIPPTSKYCCCKT</sequence>
<proteinExistence type="inferred from homology"/>
<keyword id="KW-0929">Antimicrobial</keyword>
<keyword id="KW-1015">Disulfide bond</keyword>
<keyword id="KW-0295">Fungicide</keyword>
<keyword id="KW-0611">Plant defense</keyword>
<keyword id="KW-1185">Reference proteome</keyword>
<keyword id="KW-0964">Secreted</keyword>
<keyword id="KW-0732">Signal</keyword>